<proteinExistence type="inferred from homology"/>
<sequence length="648" mass="74040">MIKITLPDGSIREFAQGVTPMEVAKNISEGFARNVISASFNGTTIETETPLTTDGNLILYTWNDAEGKKAFWHSTSHVMAQALEELYPGIKLTLGPAIANGFYYDVDFEDQKISEADFKKIEDRILEIARGKFDFKMRPVTKAEALEMYKDNVYKTELISNLEDGTITFCDHATFTDLCRGGHIPNTGIIKAVKIMSVAGAYWRGDEKNKQLTRVYGTSFPKQKDLTEYLELLEEAKRRDHRKLGKELELFAFSQKVGQGLPLWLPKGAALRDRLEQFLKRAQKKAGYEQVVSPHIGQKELYVTSGHYAKYGADSFQPIHTPAEGEEFLLKPMNCPHHCEIYNVRPWSYKDLPKRYAEFGTVYRYEQSGELHGLTRVRGFTQDDAHIFCTPEQLDEEFKKVIDLVLYVFGSLGFENFTAQISLRDQEDREKYIGTDENWEKAENAIINAAKDKGLNTVVEYGEAAFYGPKLDFMVKDALGRQWQLGTIQVDYNLPERFELTYKGADNELHRPVMIHRAPFGSMERFIAILLEHTAGNFPLWLMPEQAIILSLSEKYENYAKKVLDLLENHEIRALIDNRNETIGKKIRDAEMQKIPFMLIVGEEEEKNGTISIRRHGQEGKGNITVSIEEFASIVDEEIKKTLKVFTV</sequence>
<gene>
    <name evidence="1" type="primary">thrS</name>
    <name type="ordered locus">Fjoh_0024</name>
</gene>
<accession>A5FP01</accession>
<organism>
    <name type="scientific">Flavobacterium johnsoniae (strain ATCC 17061 / DSM 2064 / JCM 8514 / BCRC 14874 / CCUG 350202 / NBRC 14942 / NCIMB 11054 / UW101)</name>
    <name type="common">Cytophaga johnsonae</name>
    <dbReference type="NCBI Taxonomy" id="376686"/>
    <lineage>
        <taxon>Bacteria</taxon>
        <taxon>Pseudomonadati</taxon>
        <taxon>Bacteroidota</taxon>
        <taxon>Flavobacteriia</taxon>
        <taxon>Flavobacteriales</taxon>
        <taxon>Flavobacteriaceae</taxon>
        <taxon>Flavobacterium</taxon>
    </lineage>
</organism>
<reference key="1">
    <citation type="journal article" date="2009" name="Appl. Environ. Microbiol.">
        <title>Novel features of the polysaccharide-digesting gliding bacterium Flavobacterium johnsoniae as revealed by genome sequence analysis.</title>
        <authorList>
            <person name="McBride M.J."/>
            <person name="Xie G."/>
            <person name="Martens E.C."/>
            <person name="Lapidus A."/>
            <person name="Henrissat B."/>
            <person name="Rhodes R.G."/>
            <person name="Goltsman E."/>
            <person name="Wang W."/>
            <person name="Xu J."/>
            <person name="Hunnicutt D.W."/>
            <person name="Staroscik A.M."/>
            <person name="Hoover T.R."/>
            <person name="Cheng Y.Q."/>
            <person name="Stein J.L."/>
        </authorList>
    </citation>
    <scope>NUCLEOTIDE SEQUENCE [LARGE SCALE GENOMIC DNA]</scope>
    <source>
        <strain>ATCC 17061 / DSM 2064 / JCM 8514 / BCRC 14874 / CCUG 350202 / NBRC 14942 / NCIMB 11054 / UW101</strain>
    </source>
</reference>
<name>SYT_FLAJ1</name>
<dbReference type="EC" id="6.1.1.3" evidence="1"/>
<dbReference type="EMBL" id="CP000685">
    <property type="protein sequence ID" value="ABQ03062.1"/>
    <property type="molecule type" value="Genomic_DNA"/>
</dbReference>
<dbReference type="RefSeq" id="WP_011921543.1">
    <property type="nucleotide sequence ID" value="NC_009441.1"/>
</dbReference>
<dbReference type="SMR" id="A5FP01"/>
<dbReference type="STRING" id="376686.Fjoh_0024"/>
<dbReference type="KEGG" id="fjo:Fjoh_0024"/>
<dbReference type="eggNOG" id="COG0441">
    <property type="taxonomic scope" value="Bacteria"/>
</dbReference>
<dbReference type="HOGENOM" id="CLU_008554_0_1_10"/>
<dbReference type="OrthoDB" id="9802304at2"/>
<dbReference type="Proteomes" id="UP000006694">
    <property type="component" value="Chromosome"/>
</dbReference>
<dbReference type="GO" id="GO:0005737">
    <property type="term" value="C:cytoplasm"/>
    <property type="evidence" value="ECO:0007669"/>
    <property type="project" value="UniProtKB-SubCell"/>
</dbReference>
<dbReference type="GO" id="GO:0005524">
    <property type="term" value="F:ATP binding"/>
    <property type="evidence" value="ECO:0007669"/>
    <property type="project" value="UniProtKB-UniRule"/>
</dbReference>
<dbReference type="GO" id="GO:0046872">
    <property type="term" value="F:metal ion binding"/>
    <property type="evidence" value="ECO:0007669"/>
    <property type="project" value="UniProtKB-KW"/>
</dbReference>
<dbReference type="GO" id="GO:0004829">
    <property type="term" value="F:threonine-tRNA ligase activity"/>
    <property type="evidence" value="ECO:0007669"/>
    <property type="project" value="UniProtKB-UniRule"/>
</dbReference>
<dbReference type="GO" id="GO:0000049">
    <property type="term" value="F:tRNA binding"/>
    <property type="evidence" value="ECO:0007669"/>
    <property type="project" value="UniProtKB-KW"/>
</dbReference>
<dbReference type="GO" id="GO:0006435">
    <property type="term" value="P:threonyl-tRNA aminoacylation"/>
    <property type="evidence" value="ECO:0007669"/>
    <property type="project" value="UniProtKB-UniRule"/>
</dbReference>
<dbReference type="CDD" id="cd01667">
    <property type="entry name" value="TGS_ThrRS"/>
    <property type="match status" value="1"/>
</dbReference>
<dbReference type="CDD" id="cd00860">
    <property type="entry name" value="ThrRS_anticodon"/>
    <property type="match status" value="1"/>
</dbReference>
<dbReference type="CDD" id="cd00771">
    <property type="entry name" value="ThrRS_core"/>
    <property type="match status" value="1"/>
</dbReference>
<dbReference type="FunFam" id="3.10.20.30:FF:000005">
    <property type="entry name" value="Threonine--tRNA ligase"/>
    <property type="match status" value="1"/>
</dbReference>
<dbReference type="FunFam" id="3.30.930.10:FF:000002">
    <property type="entry name" value="Threonine--tRNA ligase"/>
    <property type="match status" value="1"/>
</dbReference>
<dbReference type="FunFam" id="3.40.50.800:FF:000001">
    <property type="entry name" value="Threonine--tRNA ligase"/>
    <property type="match status" value="1"/>
</dbReference>
<dbReference type="FunFam" id="3.30.980.10:FF:000005">
    <property type="entry name" value="Threonyl-tRNA synthetase, mitochondrial"/>
    <property type="match status" value="1"/>
</dbReference>
<dbReference type="Gene3D" id="3.10.20.30">
    <property type="match status" value="1"/>
</dbReference>
<dbReference type="Gene3D" id="3.30.54.20">
    <property type="match status" value="1"/>
</dbReference>
<dbReference type="Gene3D" id="3.40.50.800">
    <property type="entry name" value="Anticodon-binding domain"/>
    <property type="match status" value="1"/>
</dbReference>
<dbReference type="Gene3D" id="3.30.930.10">
    <property type="entry name" value="Bira Bifunctional Protein, Domain 2"/>
    <property type="match status" value="1"/>
</dbReference>
<dbReference type="Gene3D" id="3.30.980.10">
    <property type="entry name" value="Threonyl-trna Synthetase, Chain A, domain 2"/>
    <property type="match status" value="1"/>
</dbReference>
<dbReference type="HAMAP" id="MF_00184">
    <property type="entry name" value="Thr_tRNA_synth"/>
    <property type="match status" value="1"/>
</dbReference>
<dbReference type="InterPro" id="IPR002314">
    <property type="entry name" value="aa-tRNA-synt_IIb"/>
</dbReference>
<dbReference type="InterPro" id="IPR006195">
    <property type="entry name" value="aa-tRNA-synth_II"/>
</dbReference>
<dbReference type="InterPro" id="IPR045864">
    <property type="entry name" value="aa-tRNA-synth_II/BPL/LPL"/>
</dbReference>
<dbReference type="InterPro" id="IPR004154">
    <property type="entry name" value="Anticodon-bd"/>
</dbReference>
<dbReference type="InterPro" id="IPR036621">
    <property type="entry name" value="Anticodon-bd_dom_sf"/>
</dbReference>
<dbReference type="InterPro" id="IPR012675">
    <property type="entry name" value="Beta-grasp_dom_sf"/>
</dbReference>
<dbReference type="InterPro" id="IPR004095">
    <property type="entry name" value="TGS"/>
</dbReference>
<dbReference type="InterPro" id="IPR012676">
    <property type="entry name" value="TGS-like"/>
</dbReference>
<dbReference type="InterPro" id="IPR002320">
    <property type="entry name" value="Thr-tRNA-ligase_IIa"/>
</dbReference>
<dbReference type="InterPro" id="IPR018163">
    <property type="entry name" value="Thr/Ala-tRNA-synth_IIc_edit"/>
</dbReference>
<dbReference type="InterPro" id="IPR047246">
    <property type="entry name" value="ThrRS_anticodon"/>
</dbReference>
<dbReference type="InterPro" id="IPR033728">
    <property type="entry name" value="ThrRS_core"/>
</dbReference>
<dbReference type="InterPro" id="IPR012947">
    <property type="entry name" value="tRNA_SAD"/>
</dbReference>
<dbReference type="NCBIfam" id="TIGR00418">
    <property type="entry name" value="thrS"/>
    <property type="match status" value="1"/>
</dbReference>
<dbReference type="PANTHER" id="PTHR11451:SF44">
    <property type="entry name" value="THREONINE--TRNA LIGASE, CHLOROPLASTIC_MITOCHONDRIAL 2"/>
    <property type="match status" value="1"/>
</dbReference>
<dbReference type="PANTHER" id="PTHR11451">
    <property type="entry name" value="THREONINE-TRNA LIGASE"/>
    <property type="match status" value="1"/>
</dbReference>
<dbReference type="Pfam" id="PF03129">
    <property type="entry name" value="HGTP_anticodon"/>
    <property type="match status" value="1"/>
</dbReference>
<dbReference type="Pfam" id="PF02824">
    <property type="entry name" value="TGS"/>
    <property type="match status" value="1"/>
</dbReference>
<dbReference type="Pfam" id="PF00587">
    <property type="entry name" value="tRNA-synt_2b"/>
    <property type="match status" value="1"/>
</dbReference>
<dbReference type="Pfam" id="PF07973">
    <property type="entry name" value="tRNA_SAD"/>
    <property type="match status" value="1"/>
</dbReference>
<dbReference type="PRINTS" id="PR01047">
    <property type="entry name" value="TRNASYNTHTHR"/>
</dbReference>
<dbReference type="SMART" id="SM00863">
    <property type="entry name" value="tRNA_SAD"/>
    <property type="match status" value="1"/>
</dbReference>
<dbReference type="SUPFAM" id="SSF52954">
    <property type="entry name" value="Class II aaRS ABD-related"/>
    <property type="match status" value="1"/>
</dbReference>
<dbReference type="SUPFAM" id="SSF55681">
    <property type="entry name" value="Class II aaRS and biotin synthetases"/>
    <property type="match status" value="1"/>
</dbReference>
<dbReference type="SUPFAM" id="SSF81271">
    <property type="entry name" value="TGS-like"/>
    <property type="match status" value="1"/>
</dbReference>
<dbReference type="SUPFAM" id="SSF55186">
    <property type="entry name" value="ThrRS/AlaRS common domain"/>
    <property type="match status" value="1"/>
</dbReference>
<dbReference type="PROSITE" id="PS50862">
    <property type="entry name" value="AA_TRNA_LIGASE_II"/>
    <property type="match status" value="1"/>
</dbReference>
<dbReference type="PROSITE" id="PS51880">
    <property type="entry name" value="TGS"/>
    <property type="match status" value="1"/>
</dbReference>
<keyword id="KW-0030">Aminoacyl-tRNA synthetase</keyword>
<keyword id="KW-0067">ATP-binding</keyword>
<keyword id="KW-0963">Cytoplasm</keyword>
<keyword id="KW-0436">Ligase</keyword>
<keyword id="KW-0479">Metal-binding</keyword>
<keyword id="KW-0547">Nucleotide-binding</keyword>
<keyword id="KW-0648">Protein biosynthesis</keyword>
<keyword id="KW-0694">RNA-binding</keyword>
<keyword id="KW-0820">tRNA-binding</keyword>
<keyword id="KW-0862">Zinc</keyword>
<evidence type="ECO:0000255" key="1">
    <source>
        <dbReference type="HAMAP-Rule" id="MF_00184"/>
    </source>
</evidence>
<evidence type="ECO:0000255" key="2">
    <source>
        <dbReference type="PROSITE-ProRule" id="PRU01228"/>
    </source>
</evidence>
<feature type="chain" id="PRO_1000077358" description="Threonine--tRNA ligase">
    <location>
        <begin position="1"/>
        <end position="648"/>
    </location>
</feature>
<feature type="domain" description="TGS" evidence="2">
    <location>
        <begin position="1"/>
        <end position="61"/>
    </location>
</feature>
<feature type="region of interest" description="Catalytic" evidence="1">
    <location>
        <begin position="240"/>
        <end position="539"/>
    </location>
</feature>
<feature type="binding site" evidence="1">
    <location>
        <position position="335"/>
    </location>
    <ligand>
        <name>Zn(2+)</name>
        <dbReference type="ChEBI" id="CHEBI:29105"/>
    </ligand>
</feature>
<feature type="binding site" evidence="1">
    <location>
        <position position="386"/>
    </location>
    <ligand>
        <name>Zn(2+)</name>
        <dbReference type="ChEBI" id="CHEBI:29105"/>
    </ligand>
</feature>
<feature type="binding site" evidence="1">
    <location>
        <position position="516"/>
    </location>
    <ligand>
        <name>Zn(2+)</name>
        <dbReference type="ChEBI" id="CHEBI:29105"/>
    </ligand>
</feature>
<protein>
    <recommendedName>
        <fullName evidence="1">Threonine--tRNA ligase</fullName>
        <ecNumber evidence="1">6.1.1.3</ecNumber>
    </recommendedName>
    <alternativeName>
        <fullName evidence="1">Threonyl-tRNA synthetase</fullName>
        <shortName evidence="1">ThrRS</shortName>
    </alternativeName>
</protein>
<comment type="function">
    <text evidence="1">Catalyzes the attachment of threonine to tRNA(Thr) in a two-step reaction: L-threonine is first activated by ATP to form Thr-AMP and then transferred to the acceptor end of tRNA(Thr). Also edits incorrectly charged L-seryl-tRNA(Thr).</text>
</comment>
<comment type="catalytic activity">
    <reaction evidence="1">
        <text>tRNA(Thr) + L-threonine + ATP = L-threonyl-tRNA(Thr) + AMP + diphosphate + H(+)</text>
        <dbReference type="Rhea" id="RHEA:24624"/>
        <dbReference type="Rhea" id="RHEA-COMP:9670"/>
        <dbReference type="Rhea" id="RHEA-COMP:9704"/>
        <dbReference type="ChEBI" id="CHEBI:15378"/>
        <dbReference type="ChEBI" id="CHEBI:30616"/>
        <dbReference type="ChEBI" id="CHEBI:33019"/>
        <dbReference type="ChEBI" id="CHEBI:57926"/>
        <dbReference type="ChEBI" id="CHEBI:78442"/>
        <dbReference type="ChEBI" id="CHEBI:78534"/>
        <dbReference type="ChEBI" id="CHEBI:456215"/>
        <dbReference type="EC" id="6.1.1.3"/>
    </reaction>
</comment>
<comment type="cofactor">
    <cofactor evidence="1">
        <name>Zn(2+)</name>
        <dbReference type="ChEBI" id="CHEBI:29105"/>
    </cofactor>
    <text evidence="1">Binds 1 zinc ion per subunit.</text>
</comment>
<comment type="subunit">
    <text evidence="1">Homodimer.</text>
</comment>
<comment type="subcellular location">
    <subcellularLocation>
        <location evidence="1">Cytoplasm</location>
    </subcellularLocation>
</comment>
<comment type="similarity">
    <text evidence="1">Belongs to the class-II aminoacyl-tRNA synthetase family.</text>
</comment>